<gene>
    <name evidence="1" type="primary">pyrB</name>
    <name type="ordered locus">lpp0638</name>
</gene>
<reference key="1">
    <citation type="journal article" date="2004" name="Nat. Genet.">
        <title>Evidence in the Legionella pneumophila genome for exploitation of host cell functions and high genome plasticity.</title>
        <authorList>
            <person name="Cazalet C."/>
            <person name="Rusniok C."/>
            <person name="Brueggemann H."/>
            <person name="Zidane N."/>
            <person name="Magnier A."/>
            <person name="Ma L."/>
            <person name="Tichit M."/>
            <person name="Jarraud S."/>
            <person name="Bouchier C."/>
            <person name="Vandenesch F."/>
            <person name="Kunst F."/>
            <person name="Etienne J."/>
            <person name="Glaser P."/>
            <person name="Buchrieser C."/>
        </authorList>
    </citation>
    <scope>NUCLEOTIDE SEQUENCE [LARGE SCALE GENOMIC DNA]</scope>
    <source>
        <strain>Paris</strain>
    </source>
</reference>
<protein>
    <recommendedName>
        <fullName evidence="1">Aspartate carbamoyltransferase catalytic subunit</fullName>
        <ecNumber evidence="1">2.1.3.2</ecNumber>
    </recommendedName>
    <alternativeName>
        <fullName evidence="1">Aspartate transcarbamylase</fullName>
        <shortName evidence="1">ATCase</shortName>
    </alternativeName>
</protein>
<evidence type="ECO:0000255" key="1">
    <source>
        <dbReference type="HAMAP-Rule" id="MF_00001"/>
    </source>
</evidence>
<name>PYRB_LEGPA</name>
<sequence length="297" mass="33346">MKHFLEISQLSSEQIESLLQRALYFKHTKQYPSYSQSIIANLFYENSTRTRISFELAERHLAMSVVNLDLQTSSEIKGEAIEDTIRTLAAMGIQYFVIRHKQDGLQQNLANKLGDTVHIINAGDGTHAHPSQAILDMVTIIEQKKRLDKLKIAILGNIKHSRVANSFQCICSKLGVGDLVLISPEIWQPSQVHFGRVTDNLNEGLEGADVVICLRVQRERLLEDDHLDLDFYRNNFALTQKSLSYAKPDAMVMHPGPMNRGVEIDSEVADGNQSCILQQVTNGVYARMAILESLIAS</sequence>
<proteinExistence type="inferred from homology"/>
<dbReference type="EC" id="2.1.3.2" evidence="1"/>
<dbReference type="EMBL" id="CR628336">
    <property type="protein sequence ID" value="CAH11786.1"/>
    <property type="molecule type" value="Genomic_DNA"/>
</dbReference>
<dbReference type="RefSeq" id="WP_011213196.1">
    <property type="nucleotide sequence ID" value="NC_006368.1"/>
</dbReference>
<dbReference type="SMR" id="Q5X7G7"/>
<dbReference type="KEGG" id="lpp:lpp0638"/>
<dbReference type="LegioList" id="lpp0638"/>
<dbReference type="HOGENOM" id="CLU_043846_2_0_6"/>
<dbReference type="UniPathway" id="UPA00070">
    <property type="reaction ID" value="UER00116"/>
</dbReference>
<dbReference type="GO" id="GO:0005829">
    <property type="term" value="C:cytosol"/>
    <property type="evidence" value="ECO:0007669"/>
    <property type="project" value="TreeGrafter"/>
</dbReference>
<dbReference type="GO" id="GO:0016597">
    <property type="term" value="F:amino acid binding"/>
    <property type="evidence" value="ECO:0007669"/>
    <property type="project" value="InterPro"/>
</dbReference>
<dbReference type="GO" id="GO:0004070">
    <property type="term" value="F:aspartate carbamoyltransferase activity"/>
    <property type="evidence" value="ECO:0007669"/>
    <property type="project" value="UniProtKB-UniRule"/>
</dbReference>
<dbReference type="GO" id="GO:0006207">
    <property type="term" value="P:'de novo' pyrimidine nucleobase biosynthetic process"/>
    <property type="evidence" value="ECO:0007669"/>
    <property type="project" value="InterPro"/>
</dbReference>
<dbReference type="GO" id="GO:0044205">
    <property type="term" value="P:'de novo' UMP biosynthetic process"/>
    <property type="evidence" value="ECO:0007669"/>
    <property type="project" value="UniProtKB-UniRule"/>
</dbReference>
<dbReference type="GO" id="GO:0006520">
    <property type="term" value="P:amino acid metabolic process"/>
    <property type="evidence" value="ECO:0007669"/>
    <property type="project" value="InterPro"/>
</dbReference>
<dbReference type="Gene3D" id="3.40.50.1370">
    <property type="entry name" value="Aspartate/ornithine carbamoyltransferase"/>
    <property type="match status" value="2"/>
</dbReference>
<dbReference type="HAMAP" id="MF_00001">
    <property type="entry name" value="Asp_carb_tr"/>
    <property type="match status" value="1"/>
</dbReference>
<dbReference type="InterPro" id="IPR006132">
    <property type="entry name" value="Asp/Orn_carbamoyltranf_P-bd"/>
</dbReference>
<dbReference type="InterPro" id="IPR006130">
    <property type="entry name" value="Asp/Orn_carbamoylTrfase"/>
</dbReference>
<dbReference type="InterPro" id="IPR036901">
    <property type="entry name" value="Asp/Orn_carbamoylTrfase_sf"/>
</dbReference>
<dbReference type="InterPro" id="IPR002082">
    <property type="entry name" value="Asp_carbamoyltransf"/>
</dbReference>
<dbReference type="InterPro" id="IPR006131">
    <property type="entry name" value="Asp_carbamoyltransf_Asp/Orn-bd"/>
</dbReference>
<dbReference type="NCBIfam" id="TIGR00670">
    <property type="entry name" value="asp_carb_tr"/>
    <property type="match status" value="1"/>
</dbReference>
<dbReference type="NCBIfam" id="NF002032">
    <property type="entry name" value="PRK00856.1"/>
    <property type="match status" value="1"/>
</dbReference>
<dbReference type="PANTHER" id="PTHR45753:SF6">
    <property type="entry name" value="ASPARTATE CARBAMOYLTRANSFERASE"/>
    <property type="match status" value="1"/>
</dbReference>
<dbReference type="PANTHER" id="PTHR45753">
    <property type="entry name" value="ORNITHINE CARBAMOYLTRANSFERASE, MITOCHONDRIAL"/>
    <property type="match status" value="1"/>
</dbReference>
<dbReference type="Pfam" id="PF00185">
    <property type="entry name" value="OTCace"/>
    <property type="match status" value="1"/>
</dbReference>
<dbReference type="Pfam" id="PF02729">
    <property type="entry name" value="OTCace_N"/>
    <property type="match status" value="1"/>
</dbReference>
<dbReference type="PRINTS" id="PR00100">
    <property type="entry name" value="AOTCASE"/>
</dbReference>
<dbReference type="PRINTS" id="PR00101">
    <property type="entry name" value="ATCASE"/>
</dbReference>
<dbReference type="SUPFAM" id="SSF53671">
    <property type="entry name" value="Aspartate/ornithine carbamoyltransferase"/>
    <property type="match status" value="1"/>
</dbReference>
<dbReference type="PROSITE" id="PS00097">
    <property type="entry name" value="CARBAMOYLTRANSFERASE"/>
    <property type="match status" value="1"/>
</dbReference>
<keyword id="KW-0665">Pyrimidine biosynthesis</keyword>
<keyword id="KW-0808">Transferase</keyword>
<feature type="chain" id="PRO_0000113149" description="Aspartate carbamoyltransferase catalytic subunit">
    <location>
        <begin position="1"/>
        <end position="297"/>
    </location>
</feature>
<feature type="binding site" evidence="1">
    <location>
        <position position="49"/>
    </location>
    <ligand>
        <name>carbamoyl phosphate</name>
        <dbReference type="ChEBI" id="CHEBI:58228"/>
    </ligand>
</feature>
<feature type="binding site" evidence="1">
    <location>
        <position position="50"/>
    </location>
    <ligand>
        <name>carbamoyl phosphate</name>
        <dbReference type="ChEBI" id="CHEBI:58228"/>
    </ligand>
</feature>
<feature type="binding site" evidence="1">
    <location>
        <position position="77"/>
    </location>
    <ligand>
        <name>L-aspartate</name>
        <dbReference type="ChEBI" id="CHEBI:29991"/>
    </ligand>
</feature>
<feature type="binding site" evidence="1">
    <location>
        <position position="99"/>
    </location>
    <ligand>
        <name>carbamoyl phosphate</name>
        <dbReference type="ChEBI" id="CHEBI:58228"/>
    </ligand>
</feature>
<feature type="binding site" evidence="1">
    <location>
        <position position="129"/>
    </location>
    <ligand>
        <name>carbamoyl phosphate</name>
        <dbReference type="ChEBI" id="CHEBI:58228"/>
    </ligand>
</feature>
<feature type="binding site" evidence="1">
    <location>
        <position position="132"/>
    </location>
    <ligand>
        <name>carbamoyl phosphate</name>
        <dbReference type="ChEBI" id="CHEBI:58228"/>
    </ligand>
</feature>
<feature type="binding site" evidence="1">
    <location>
        <position position="162"/>
    </location>
    <ligand>
        <name>L-aspartate</name>
        <dbReference type="ChEBI" id="CHEBI:29991"/>
    </ligand>
</feature>
<feature type="binding site" evidence="1">
    <location>
        <position position="215"/>
    </location>
    <ligand>
        <name>L-aspartate</name>
        <dbReference type="ChEBI" id="CHEBI:29991"/>
    </ligand>
</feature>
<feature type="binding site" evidence="1">
    <location>
        <position position="256"/>
    </location>
    <ligand>
        <name>carbamoyl phosphate</name>
        <dbReference type="ChEBI" id="CHEBI:58228"/>
    </ligand>
</feature>
<feature type="binding site" evidence="1">
    <location>
        <position position="257"/>
    </location>
    <ligand>
        <name>carbamoyl phosphate</name>
        <dbReference type="ChEBI" id="CHEBI:58228"/>
    </ligand>
</feature>
<organism>
    <name type="scientific">Legionella pneumophila (strain Paris)</name>
    <dbReference type="NCBI Taxonomy" id="297246"/>
    <lineage>
        <taxon>Bacteria</taxon>
        <taxon>Pseudomonadati</taxon>
        <taxon>Pseudomonadota</taxon>
        <taxon>Gammaproteobacteria</taxon>
        <taxon>Legionellales</taxon>
        <taxon>Legionellaceae</taxon>
        <taxon>Legionella</taxon>
    </lineage>
</organism>
<accession>Q5X7G7</accession>
<comment type="function">
    <text evidence="1">Catalyzes the condensation of carbamoyl phosphate and aspartate to form carbamoyl aspartate and inorganic phosphate, the committed step in the de novo pyrimidine nucleotide biosynthesis pathway.</text>
</comment>
<comment type="catalytic activity">
    <reaction evidence="1">
        <text>carbamoyl phosphate + L-aspartate = N-carbamoyl-L-aspartate + phosphate + H(+)</text>
        <dbReference type="Rhea" id="RHEA:20013"/>
        <dbReference type="ChEBI" id="CHEBI:15378"/>
        <dbReference type="ChEBI" id="CHEBI:29991"/>
        <dbReference type="ChEBI" id="CHEBI:32814"/>
        <dbReference type="ChEBI" id="CHEBI:43474"/>
        <dbReference type="ChEBI" id="CHEBI:58228"/>
        <dbReference type="EC" id="2.1.3.2"/>
    </reaction>
</comment>
<comment type="pathway">
    <text evidence="1">Pyrimidine metabolism; UMP biosynthesis via de novo pathway; (S)-dihydroorotate from bicarbonate: step 2/3.</text>
</comment>
<comment type="subunit">
    <text evidence="1">Heterododecamer (2C3:3R2) of six catalytic PyrB chains organized as two trimers (C3), and six regulatory PyrI chains organized as three dimers (R2).</text>
</comment>
<comment type="similarity">
    <text evidence="1">Belongs to the aspartate/ornithine carbamoyltransferase superfamily. ATCase family.</text>
</comment>